<sequence>MMQQVKRAFKYRFYPTDEQAAELSRTFGCVRLVYNKALEGRTRAWYGEQRRVSYVQSSAALTEWKKTEELAFLSEVSSVPLQQALRHLQTAFANFFAKRSKYPRYKSRKKSRASAEYTRSAFTWRNGQLTLAKTAEPLDIRWSRPLPEGAEPTTVTVSRDRAGRWFVSLLCEDTITPAPATTAAVGIDAGITSLVTLSTGEKITNPKHERRDRARLAKAQRDVSRKAKGSANRKKARRKVARVHARITDRRCDFLHKLSTRLVRENQTVVIEDLTVRNLLKNGKLARAISDAAWTELRSMLEYKCAWYGRELVVIDRWFPSSKLCGTCGTVRGKLPLNVREWTCDCGAVHDRDVNAARNILAAGLAASACGDGIRPQRESSRTGRSSVKQEPQRATAGIPRL</sequence>
<evidence type="ECO:0000250" key="1">
    <source>
        <dbReference type="UniProtKB" id="Q7DF80"/>
    </source>
</evidence>
<evidence type="ECO:0000256" key="2">
    <source>
        <dbReference type="SAM" id="MobiDB-lite"/>
    </source>
</evidence>
<evidence type="ECO:0000305" key="3"/>
<proteinExistence type="inferred from homology"/>
<comment type="function">
    <text evidence="1">An RNA-guided dsDNA endonuclease. When guided by an RNA derived from the right-end element of its insertion sequence element (IS), cleaves DNA downstream of the transposon-associated motif (TAM). Cleaves supercoiled and linear DNA in a staggered manner 15-21 bases from the TAM yielding 5'-overhangs. Binds reRNA, an approximately 150 nucleotide base sRNA derived from the 3' end of its own gene, the right end (RE) of the insertion sequence (IS) plus sequence downstream of the IS.</text>
</comment>
<comment type="similarity">
    <text evidence="3">In the N-terminal section; belongs to the transposase 2 family.</text>
</comment>
<comment type="similarity">
    <text evidence="3">In the C-terminal section; belongs to the transposase 35 family.</text>
</comment>
<keyword id="KW-0233">DNA recombination</keyword>
<keyword id="KW-0238">DNA-binding</keyword>
<keyword id="KW-0255">Endonuclease</keyword>
<keyword id="KW-0378">Hydrolase</keyword>
<keyword id="KW-0479">Metal-binding</keyword>
<keyword id="KW-0540">Nuclease</keyword>
<keyword id="KW-0814">Transposable element</keyword>
<keyword id="KW-0815">Transposition</keyword>
<keyword id="KW-0862">Zinc</keyword>
<dbReference type="EC" id="3.1.21.-" evidence="1"/>
<dbReference type="EMBL" id="U21215">
    <property type="protein sequence ID" value="AAA83564.1"/>
    <property type="molecule type" value="Genomic_DNA"/>
</dbReference>
<dbReference type="SMR" id="P54992"/>
<dbReference type="STRING" id="38300.SPRI_0184"/>
<dbReference type="GO" id="GO:0003677">
    <property type="term" value="F:DNA binding"/>
    <property type="evidence" value="ECO:0007669"/>
    <property type="project" value="UniProtKB-KW"/>
</dbReference>
<dbReference type="GO" id="GO:0004519">
    <property type="term" value="F:endonuclease activity"/>
    <property type="evidence" value="ECO:0007669"/>
    <property type="project" value="UniProtKB-KW"/>
</dbReference>
<dbReference type="GO" id="GO:0046872">
    <property type="term" value="F:metal ion binding"/>
    <property type="evidence" value="ECO:0007669"/>
    <property type="project" value="UniProtKB-KW"/>
</dbReference>
<dbReference type="GO" id="GO:0006310">
    <property type="term" value="P:DNA recombination"/>
    <property type="evidence" value="ECO:0007669"/>
    <property type="project" value="UniProtKB-KW"/>
</dbReference>
<dbReference type="GO" id="GO:0032196">
    <property type="term" value="P:transposition"/>
    <property type="evidence" value="ECO:0007669"/>
    <property type="project" value="UniProtKB-KW"/>
</dbReference>
<dbReference type="InterPro" id="IPR010095">
    <property type="entry name" value="Cas12f1-like_TNB"/>
</dbReference>
<dbReference type="InterPro" id="IPR051399">
    <property type="entry name" value="RNA-guided_DNA_endo/Transpos"/>
</dbReference>
<dbReference type="InterPro" id="IPR001959">
    <property type="entry name" value="Transposase"/>
</dbReference>
<dbReference type="InterPro" id="IPR021027">
    <property type="entry name" value="Transposase_put_HTH"/>
</dbReference>
<dbReference type="NCBIfam" id="NF040570">
    <property type="entry name" value="guided_TnpB"/>
    <property type="match status" value="1"/>
</dbReference>
<dbReference type="NCBIfam" id="TIGR01766">
    <property type="entry name" value="IS200/IS605 family accessory protein TnpB-like domain"/>
    <property type="match status" value="1"/>
</dbReference>
<dbReference type="PANTHER" id="PTHR30405:SF25">
    <property type="entry name" value="RNA-GUIDED DNA ENDONUCLEASE INSQ-RELATED"/>
    <property type="match status" value="1"/>
</dbReference>
<dbReference type="PANTHER" id="PTHR30405">
    <property type="entry name" value="TRANSPOSASE"/>
    <property type="match status" value="1"/>
</dbReference>
<dbReference type="Pfam" id="PF07282">
    <property type="entry name" value="Cas12f1-like_TNB"/>
    <property type="match status" value="1"/>
</dbReference>
<dbReference type="Pfam" id="PF12323">
    <property type="entry name" value="HTH_OrfB_IS605"/>
    <property type="match status" value="1"/>
</dbReference>
<dbReference type="Pfam" id="PF01385">
    <property type="entry name" value="OrfB_IS605"/>
    <property type="match status" value="1"/>
</dbReference>
<organism>
    <name type="scientific">Streptomyces pristinaespiralis</name>
    <dbReference type="NCBI Taxonomy" id="38300"/>
    <lineage>
        <taxon>Bacteria</taxon>
        <taxon>Bacillati</taxon>
        <taxon>Actinomycetota</taxon>
        <taxon>Actinomycetes</taxon>
        <taxon>Kitasatosporales</taxon>
        <taxon>Streptomycetaceae</taxon>
        <taxon>Streptomyces</taxon>
    </lineage>
</organism>
<name>YSNA_STRPR</name>
<feature type="chain" id="PRO_0000066503" description="Putative RNA-guided DNA endonuclease">
    <location>
        <begin position="1"/>
        <end position="402"/>
    </location>
</feature>
<feature type="region of interest" description="Disordered" evidence="2">
    <location>
        <begin position="202"/>
        <end position="239"/>
    </location>
</feature>
<feature type="region of interest" description="Disordered" evidence="2">
    <location>
        <begin position="373"/>
        <end position="402"/>
    </location>
</feature>
<feature type="compositionally biased region" description="Basic and acidic residues" evidence="2">
    <location>
        <begin position="204"/>
        <end position="225"/>
    </location>
</feature>
<feature type="compositionally biased region" description="Basic residues" evidence="2">
    <location>
        <begin position="226"/>
        <end position="239"/>
    </location>
</feature>
<feature type="active site" evidence="1">
    <location>
        <position position="188"/>
    </location>
</feature>
<feature type="active site" evidence="1">
    <location>
        <position position="272"/>
    </location>
</feature>
<feature type="active site" evidence="1">
    <location>
        <position position="353"/>
    </location>
</feature>
<feature type="binding site" evidence="1">
    <location>
        <position position="325"/>
    </location>
    <ligand>
        <name>Zn(2+)</name>
        <dbReference type="ChEBI" id="CHEBI:29105"/>
    </ligand>
</feature>
<feature type="binding site" evidence="1">
    <location>
        <position position="328"/>
    </location>
    <ligand>
        <name>Zn(2+)</name>
        <dbReference type="ChEBI" id="CHEBI:29105"/>
    </ligand>
</feature>
<feature type="binding site" evidence="1">
    <location>
        <position position="344"/>
    </location>
    <ligand>
        <name>Zn(2+)</name>
        <dbReference type="ChEBI" id="CHEBI:29105"/>
    </ligand>
</feature>
<feature type="binding site" evidence="1">
    <location>
        <position position="346"/>
    </location>
    <ligand>
        <name>Zn(2+)</name>
        <dbReference type="ChEBI" id="CHEBI:29105"/>
    </ligand>
</feature>
<protein>
    <recommendedName>
        <fullName evidence="1">Putative RNA-guided DNA endonuclease</fullName>
        <ecNumber evidence="1">3.1.21.-</ecNumber>
    </recommendedName>
    <alternativeName>
        <fullName>ORF401</fullName>
    </alternativeName>
</protein>
<reference key="1">
    <citation type="journal article" date="1995" name="J. Bacteriol.">
        <title>Cloning and analysis of structural genes from Streptomyces pristinaespiralis encoding enzymes involved in the conversion of pristinamycin IIB to pristinamycin IIA (PIIA): PIIA synthase and NADH:riboflavin 5'-phosphate oxidoreductase.</title>
        <authorList>
            <person name="Blanc V."/>
            <person name="Lagneaux D."/>
            <person name="Didier P."/>
            <person name="Gil P."/>
            <person name="Lacroix P."/>
            <person name="Crouzet J."/>
        </authorList>
    </citation>
    <scope>NUCLEOTIDE SEQUENCE [GENOMIC DNA]</scope>
    <source>
        <strain>SP92</strain>
    </source>
</reference>
<accession>P54992</accession>